<organism>
    <name type="scientific">Pseudomonas syringae pv. tomato (strain ATCC BAA-871 / DC3000)</name>
    <dbReference type="NCBI Taxonomy" id="223283"/>
    <lineage>
        <taxon>Bacteria</taxon>
        <taxon>Pseudomonadati</taxon>
        <taxon>Pseudomonadota</taxon>
        <taxon>Gammaproteobacteria</taxon>
        <taxon>Pseudomonadales</taxon>
        <taxon>Pseudomonadaceae</taxon>
        <taxon>Pseudomonas</taxon>
    </lineage>
</organism>
<proteinExistence type="inferred from homology"/>
<feature type="chain" id="PRO_0000075606" description="2-C-methyl-D-erythritol 4-phosphate cytidylyltransferase">
    <location>
        <begin position="1"/>
        <end position="236"/>
    </location>
</feature>
<feature type="site" description="Transition state stabilizer" evidence="1">
    <location>
        <position position="20"/>
    </location>
</feature>
<feature type="site" description="Transition state stabilizer" evidence="1">
    <location>
        <position position="27"/>
    </location>
</feature>
<feature type="site" description="Positions MEP for the nucleophilic attack" evidence="1">
    <location>
        <position position="161"/>
    </location>
</feature>
<feature type="site" description="Positions MEP for the nucleophilic attack" evidence="1">
    <location>
        <position position="217"/>
    </location>
</feature>
<reference key="1">
    <citation type="journal article" date="2003" name="Proc. Natl. Acad. Sci. U.S.A.">
        <title>The complete genome sequence of the Arabidopsis and tomato pathogen Pseudomonas syringae pv. tomato DC3000.</title>
        <authorList>
            <person name="Buell C.R."/>
            <person name="Joardar V."/>
            <person name="Lindeberg M."/>
            <person name="Selengut J."/>
            <person name="Paulsen I.T."/>
            <person name="Gwinn M.L."/>
            <person name="Dodson R.J."/>
            <person name="DeBoy R.T."/>
            <person name="Durkin A.S."/>
            <person name="Kolonay J.F."/>
            <person name="Madupu R."/>
            <person name="Daugherty S.C."/>
            <person name="Brinkac L.M."/>
            <person name="Beanan M.J."/>
            <person name="Haft D.H."/>
            <person name="Nelson W.C."/>
            <person name="Davidsen T.M."/>
            <person name="Zafar N."/>
            <person name="Zhou L."/>
            <person name="Liu J."/>
            <person name="Yuan Q."/>
            <person name="Khouri H.M."/>
            <person name="Fedorova N.B."/>
            <person name="Tran B."/>
            <person name="Russell D."/>
            <person name="Berry K.J."/>
            <person name="Utterback T.R."/>
            <person name="Van Aken S.E."/>
            <person name="Feldblyum T.V."/>
            <person name="D'Ascenzo M."/>
            <person name="Deng W.-L."/>
            <person name="Ramos A.R."/>
            <person name="Alfano J.R."/>
            <person name="Cartinhour S."/>
            <person name="Chatterjee A.K."/>
            <person name="Delaney T.P."/>
            <person name="Lazarowitz S.G."/>
            <person name="Martin G.B."/>
            <person name="Schneider D.J."/>
            <person name="Tang X."/>
            <person name="Bender C.L."/>
            <person name="White O."/>
            <person name="Fraser C.M."/>
            <person name="Collmer A."/>
        </authorList>
    </citation>
    <scope>NUCLEOTIDE SEQUENCE [LARGE SCALE GENOMIC DNA]</scope>
    <source>
        <strain>ATCC BAA-871 / DC3000</strain>
    </source>
</reference>
<protein>
    <recommendedName>
        <fullName evidence="1">2-C-methyl-D-erythritol 4-phosphate cytidylyltransferase</fullName>
        <ecNumber evidence="1">2.7.7.60</ecNumber>
    </recommendedName>
    <alternativeName>
        <fullName evidence="1">4-diphosphocytidyl-2C-methyl-D-erythritol synthase</fullName>
    </alternativeName>
    <alternativeName>
        <fullName evidence="1">MEP cytidylyltransferase</fullName>
        <shortName evidence="1">MCT</shortName>
    </alternativeName>
</protein>
<accession>Q886M1</accession>
<sequence length="236" mass="25995">MTDFLPAFWAVIPAAGIGARMAADRPKQYLQLGGLTILEHSLLCFLDHPRLKGLVISLAVDDPYWAALPCAHDSRIQRVDGGRERSGSVLNALLHLHAQGASDDDWVLVHDAARPNLARSDLDNLLGQLADDPVGGLLAVPARDTLKRADSDGRVVETVDRSLIWQAFTPQMFRLGTLHRALADSLVSNVSITDEASAIEWAGQSPRLIEGRSDNIKVTRPEDLEWLRQRRSEFGR</sequence>
<gene>
    <name evidence="1" type="primary">ispD</name>
    <name type="ordered locus">PSPTO_1556</name>
</gene>
<comment type="function">
    <text evidence="1">Catalyzes the formation of 4-diphosphocytidyl-2-C-methyl-D-erythritol from CTP and 2-C-methyl-D-erythritol 4-phosphate (MEP).</text>
</comment>
<comment type="catalytic activity">
    <reaction evidence="1">
        <text>2-C-methyl-D-erythritol 4-phosphate + CTP + H(+) = 4-CDP-2-C-methyl-D-erythritol + diphosphate</text>
        <dbReference type="Rhea" id="RHEA:13429"/>
        <dbReference type="ChEBI" id="CHEBI:15378"/>
        <dbReference type="ChEBI" id="CHEBI:33019"/>
        <dbReference type="ChEBI" id="CHEBI:37563"/>
        <dbReference type="ChEBI" id="CHEBI:57823"/>
        <dbReference type="ChEBI" id="CHEBI:58262"/>
        <dbReference type="EC" id="2.7.7.60"/>
    </reaction>
</comment>
<comment type="pathway">
    <text evidence="1">Isoprenoid biosynthesis; isopentenyl diphosphate biosynthesis via DXP pathway; isopentenyl diphosphate from 1-deoxy-D-xylulose 5-phosphate: step 2/6.</text>
</comment>
<comment type="similarity">
    <text evidence="1">Belongs to the IspD/TarI cytidylyltransferase family. IspD subfamily.</text>
</comment>
<evidence type="ECO:0000255" key="1">
    <source>
        <dbReference type="HAMAP-Rule" id="MF_00108"/>
    </source>
</evidence>
<dbReference type="EC" id="2.7.7.60" evidence="1"/>
<dbReference type="EMBL" id="AE016853">
    <property type="protein sequence ID" value="AAO55076.1"/>
    <property type="molecule type" value="Genomic_DNA"/>
</dbReference>
<dbReference type="RefSeq" id="NP_791381.1">
    <property type="nucleotide sequence ID" value="NC_004578.1"/>
</dbReference>
<dbReference type="RefSeq" id="WP_005766007.1">
    <property type="nucleotide sequence ID" value="NC_004578.1"/>
</dbReference>
<dbReference type="SMR" id="Q886M1"/>
<dbReference type="STRING" id="223283.PSPTO_1556"/>
<dbReference type="GeneID" id="1183193"/>
<dbReference type="KEGG" id="pst:PSPTO_1556"/>
<dbReference type="PATRIC" id="fig|223283.9.peg.1582"/>
<dbReference type="eggNOG" id="COG1211">
    <property type="taxonomic scope" value="Bacteria"/>
</dbReference>
<dbReference type="HOGENOM" id="CLU_061281_3_1_6"/>
<dbReference type="OrthoDB" id="9806837at2"/>
<dbReference type="PhylomeDB" id="Q886M1"/>
<dbReference type="UniPathway" id="UPA00056">
    <property type="reaction ID" value="UER00093"/>
</dbReference>
<dbReference type="Proteomes" id="UP000002515">
    <property type="component" value="Chromosome"/>
</dbReference>
<dbReference type="GO" id="GO:0050518">
    <property type="term" value="F:2-C-methyl-D-erythritol 4-phosphate cytidylyltransferase activity"/>
    <property type="evidence" value="ECO:0007669"/>
    <property type="project" value="UniProtKB-UniRule"/>
</dbReference>
<dbReference type="GO" id="GO:0019288">
    <property type="term" value="P:isopentenyl diphosphate biosynthetic process, methylerythritol 4-phosphate pathway"/>
    <property type="evidence" value="ECO:0007669"/>
    <property type="project" value="UniProtKB-UniRule"/>
</dbReference>
<dbReference type="CDD" id="cd02516">
    <property type="entry name" value="CDP-ME_synthetase"/>
    <property type="match status" value="1"/>
</dbReference>
<dbReference type="FunFam" id="3.90.550.10:FF:000003">
    <property type="entry name" value="2-C-methyl-D-erythritol 4-phosphate cytidylyltransferase"/>
    <property type="match status" value="1"/>
</dbReference>
<dbReference type="Gene3D" id="3.90.550.10">
    <property type="entry name" value="Spore Coat Polysaccharide Biosynthesis Protein SpsA, Chain A"/>
    <property type="match status" value="1"/>
</dbReference>
<dbReference type="HAMAP" id="MF_00108">
    <property type="entry name" value="IspD"/>
    <property type="match status" value="1"/>
</dbReference>
<dbReference type="InterPro" id="IPR001228">
    <property type="entry name" value="IspD"/>
</dbReference>
<dbReference type="InterPro" id="IPR034683">
    <property type="entry name" value="IspD/TarI"/>
</dbReference>
<dbReference type="InterPro" id="IPR050088">
    <property type="entry name" value="IspD/TarI_cytidylyltransf_bact"/>
</dbReference>
<dbReference type="InterPro" id="IPR018294">
    <property type="entry name" value="ISPD_synthase_CS"/>
</dbReference>
<dbReference type="InterPro" id="IPR029044">
    <property type="entry name" value="Nucleotide-diphossugar_trans"/>
</dbReference>
<dbReference type="NCBIfam" id="TIGR00453">
    <property type="entry name" value="ispD"/>
    <property type="match status" value="1"/>
</dbReference>
<dbReference type="PANTHER" id="PTHR32125">
    <property type="entry name" value="2-C-METHYL-D-ERYTHRITOL 4-PHOSPHATE CYTIDYLYLTRANSFERASE, CHLOROPLASTIC"/>
    <property type="match status" value="1"/>
</dbReference>
<dbReference type="PANTHER" id="PTHR32125:SF4">
    <property type="entry name" value="2-C-METHYL-D-ERYTHRITOL 4-PHOSPHATE CYTIDYLYLTRANSFERASE, CHLOROPLASTIC"/>
    <property type="match status" value="1"/>
</dbReference>
<dbReference type="Pfam" id="PF01128">
    <property type="entry name" value="IspD"/>
    <property type="match status" value="1"/>
</dbReference>
<dbReference type="SUPFAM" id="SSF53448">
    <property type="entry name" value="Nucleotide-diphospho-sugar transferases"/>
    <property type="match status" value="1"/>
</dbReference>
<dbReference type="PROSITE" id="PS01295">
    <property type="entry name" value="ISPD"/>
    <property type="match status" value="1"/>
</dbReference>
<keyword id="KW-0414">Isoprene biosynthesis</keyword>
<keyword id="KW-0548">Nucleotidyltransferase</keyword>
<keyword id="KW-1185">Reference proteome</keyword>
<keyword id="KW-0808">Transferase</keyword>
<name>ISPD_PSESM</name>